<sequence length="184" mass="19861">MQGPHDFHTPKSSYSKEDLLESGKGGYFGPGNAQLPAPPMLMMDRITEISLDGGAFGKGHVVGELDITPDLWFFQCHFPGDPVMPGCLGLDAMWQIVGYWLGWSGSPGKGRALGVGEVKFTGEITPDKKLVRYEIDIKRVRRGKLNLGIADGRVYVDGEHVYTAIDMKVGLKNVLGGAGDLPAS</sequence>
<dbReference type="EC" id="4.2.1.59" evidence="1"/>
<dbReference type="EC" id="5.3.3.14" evidence="1"/>
<dbReference type="EMBL" id="CP000158">
    <property type="protein sequence ID" value="ABI78582.1"/>
    <property type="molecule type" value="Genomic_DNA"/>
</dbReference>
<dbReference type="RefSeq" id="WP_011648403.1">
    <property type="nucleotide sequence ID" value="NC_008358.1"/>
</dbReference>
<dbReference type="SMR" id="Q0BWN5"/>
<dbReference type="STRING" id="228405.HNE_3435"/>
<dbReference type="KEGG" id="hne:HNE_3435"/>
<dbReference type="eggNOG" id="COG0764">
    <property type="taxonomic scope" value="Bacteria"/>
</dbReference>
<dbReference type="HOGENOM" id="CLU_097925_0_0_5"/>
<dbReference type="UniPathway" id="UPA00094"/>
<dbReference type="Proteomes" id="UP000001959">
    <property type="component" value="Chromosome"/>
</dbReference>
<dbReference type="GO" id="GO:0005737">
    <property type="term" value="C:cytoplasm"/>
    <property type="evidence" value="ECO:0007669"/>
    <property type="project" value="UniProtKB-SubCell"/>
</dbReference>
<dbReference type="GO" id="GO:0019171">
    <property type="term" value="F:(3R)-hydroxyacyl-[acyl-carrier-protein] dehydratase activity"/>
    <property type="evidence" value="ECO:0007669"/>
    <property type="project" value="UniProtKB-UniRule"/>
</dbReference>
<dbReference type="GO" id="GO:0034017">
    <property type="term" value="F:trans-2-decenoyl-acyl-carrier-protein isomerase activity"/>
    <property type="evidence" value="ECO:0007669"/>
    <property type="project" value="UniProtKB-UniRule"/>
</dbReference>
<dbReference type="GO" id="GO:0006636">
    <property type="term" value="P:unsaturated fatty acid biosynthetic process"/>
    <property type="evidence" value="ECO:0007669"/>
    <property type="project" value="UniProtKB-UniRule"/>
</dbReference>
<dbReference type="CDD" id="cd01287">
    <property type="entry name" value="FabA"/>
    <property type="match status" value="1"/>
</dbReference>
<dbReference type="Gene3D" id="3.10.129.10">
    <property type="entry name" value="Hotdog Thioesterase"/>
    <property type="match status" value="1"/>
</dbReference>
<dbReference type="HAMAP" id="MF_00405">
    <property type="entry name" value="FabA"/>
    <property type="match status" value="1"/>
</dbReference>
<dbReference type="InterPro" id="IPR010083">
    <property type="entry name" value="FabA"/>
</dbReference>
<dbReference type="InterPro" id="IPR013114">
    <property type="entry name" value="FabA_FabZ"/>
</dbReference>
<dbReference type="InterPro" id="IPR029069">
    <property type="entry name" value="HotDog_dom_sf"/>
</dbReference>
<dbReference type="NCBIfam" id="TIGR01749">
    <property type="entry name" value="fabA"/>
    <property type="match status" value="1"/>
</dbReference>
<dbReference type="NCBIfam" id="NF003509">
    <property type="entry name" value="PRK05174.1"/>
    <property type="match status" value="1"/>
</dbReference>
<dbReference type="PANTHER" id="PTHR30272">
    <property type="entry name" value="3-HYDROXYACYL-[ACYL-CARRIER-PROTEIN] DEHYDRATASE"/>
    <property type="match status" value="1"/>
</dbReference>
<dbReference type="PANTHER" id="PTHR30272:SF8">
    <property type="entry name" value="3-HYDROXYDECANOYL-[ACYL-CARRIER-PROTEIN] DEHYDRATASE"/>
    <property type="match status" value="1"/>
</dbReference>
<dbReference type="Pfam" id="PF07977">
    <property type="entry name" value="FabA"/>
    <property type="match status" value="1"/>
</dbReference>
<dbReference type="SUPFAM" id="SSF54637">
    <property type="entry name" value="Thioesterase/thiol ester dehydrase-isomerase"/>
    <property type="match status" value="1"/>
</dbReference>
<name>FABA_HYPNA</name>
<feature type="chain" id="PRO_0000267732" description="3-hydroxydecanoyl-[acyl-carrier-protein] dehydratase">
    <location>
        <begin position="1"/>
        <end position="184"/>
    </location>
</feature>
<feature type="active site" evidence="1">
    <location>
        <position position="77"/>
    </location>
</feature>
<keyword id="KW-0963">Cytoplasm</keyword>
<keyword id="KW-0275">Fatty acid biosynthesis</keyword>
<keyword id="KW-0276">Fatty acid metabolism</keyword>
<keyword id="KW-0413">Isomerase</keyword>
<keyword id="KW-0444">Lipid biosynthesis</keyword>
<keyword id="KW-0443">Lipid metabolism</keyword>
<keyword id="KW-0456">Lyase</keyword>
<keyword id="KW-1185">Reference proteome</keyword>
<accession>Q0BWN5</accession>
<reference key="1">
    <citation type="journal article" date="2006" name="J. Bacteriol.">
        <title>Comparative genomic evidence for a close relationship between the dimorphic prosthecate bacteria Hyphomonas neptunium and Caulobacter crescentus.</title>
        <authorList>
            <person name="Badger J.H."/>
            <person name="Hoover T.R."/>
            <person name="Brun Y.V."/>
            <person name="Weiner R.M."/>
            <person name="Laub M.T."/>
            <person name="Alexandre G."/>
            <person name="Mrazek J."/>
            <person name="Ren Q."/>
            <person name="Paulsen I.T."/>
            <person name="Nelson K.E."/>
            <person name="Khouri H.M."/>
            <person name="Radune D."/>
            <person name="Sosa J."/>
            <person name="Dodson R.J."/>
            <person name="Sullivan S.A."/>
            <person name="Rosovitz M.J."/>
            <person name="Madupu R."/>
            <person name="Brinkac L.M."/>
            <person name="Durkin A.S."/>
            <person name="Daugherty S.C."/>
            <person name="Kothari S.P."/>
            <person name="Giglio M.G."/>
            <person name="Zhou L."/>
            <person name="Haft D.H."/>
            <person name="Selengut J.D."/>
            <person name="Davidsen T.M."/>
            <person name="Yang Q."/>
            <person name="Zafar N."/>
            <person name="Ward N.L."/>
        </authorList>
    </citation>
    <scope>NUCLEOTIDE SEQUENCE [LARGE SCALE GENOMIC DNA]</scope>
    <source>
        <strain>ATCC 15444</strain>
    </source>
</reference>
<organism>
    <name type="scientific">Hyphomonas neptunium (strain ATCC 15444)</name>
    <dbReference type="NCBI Taxonomy" id="228405"/>
    <lineage>
        <taxon>Bacteria</taxon>
        <taxon>Pseudomonadati</taxon>
        <taxon>Pseudomonadota</taxon>
        <taxon>Alphaproteobacteria</taxon>
        <taxon>Hyphomonadales</taxon>
        <taxon>Hyphomonadaceae</taxon>
        <taxon>Hyphomonas</taxon>
    </lineage>
</organism>
<proteinExistence type="inferred from homology"/>
<protein>
    <recommendedName>
        <fullName evidence="1">3-hydroxydecanoyl-[acyl-carrier-protein] dehydratase</fullName>
        <ecNumber evidence="1">4.2.1.59</ecNumber>
    </recommendedName>
    <alternativeName>
        <fullName evidence="1">3-hydroxyacyl-[acyl-carrier-protein] dehydratase FabA</fullName>
    </alternativeName>
    <alternativeName>
        <fullName evidence="1">Beta-hydroxydecanoyl thioester dehydrase</fullName>
    </alternativeName>
    <alternativeName>
        <fullName evidence="1">Trans-2-decenoyl-[acyl-carrier-protein] isomerase</fullName>
        <ecNumber evidence="1">5.3.3.14</ecNumber>
    </alternativeName>
</protein>
<comment type="function">
    <text evidence="1">Necessary for the introduction of cis unsaturation into fatty acids. Catalyzes the dehydration of (3R)-3-hydroxydecanoyl-ACP to E-(2)-decenoyl-ACP and then its isomerization to Z-(3)-decenoyl-ACP. Can catalyze the dehydratase reaction for beta-hydroxyacyl-ACPs with saturated chain lengths up to 16:0, being most active on intermediate chain length.</text>
</comment>
<comment type="catalytic activity">
    <reaction evidence="1">
        <text>a (3R)-hydroxyacyl-[ACP] = a (2E)-enoyl-[ACP] + H2O</text>
        <dbReference type="Rhea" id="RHEA:13097"/>
        <dbReference type="Rhea" id="RHEA-COMP:9925"/>
        <dbReference type="Rhea" id="RHEA-COMP:9945"/>
        <dbReference type="ChEBI" id="CHEBI:15377"/>
        <dbReference type="ChEBI" id="CHEBI:78784"/>
        <dbReference type="ChEBI" id="CHEBI:78827"/>
        <dbReference type="EC" id="4.2.1.59"/>
    </reaction>
</comment>
<comment type="catalytic activity">
    <reaction evidence="1">
        <text>(3R)-hydroxydecanoyl-[ACP] = (2E)-decenoyl-[ACP] + H2O</text>
        <dbReference type="Rhea" id="RHEA:41860"/>
        <dbReference type="Rhea" id="RHEA-COMP:9638"/>
        <dbReference type="Rhea" id="RHEA-COMP:9639"/>
        <dbReference type="ChEBI" id="CHEBI:15377"/>
        <dbReference type="ChEBI" id="CHEBI:78466"/>
        <dbReference type="ChEBI" id="CHEBI:78467"/>
    </reaction>
</comment>
<comment type="catalytic activity">
    <reaction evidence="1">
        <text>(2E)-decenoyl-[ACP] = (3Z)-decenoyl-[ACP]</text>
        <dbReference type="Rhea" id="RHEA:23568"/>
        <dbReference type="Rhea" id="RHEA-COMP:9639"/>
        <dbReference type="Rhea" id="RHEA-COMP:9927"/>
        <dbReference type="ChEBI" id="CHEBI:78467"/>
        <dbReference type="ChEBI" id="CHEBI:78798"/>
        <dbReference type="EC" id="5.3.3.14"/>
    </reaction>
</comment>
<comment type="pathway">
    <text evidence="1">Lipid metabolism; fatty acid biosynthesis.</text>
</comment>
<comment type="subunit">
    <text evidence="1">Homodimer.</text>
</comment>
<comment type="subcellular location">
    <subcellularLocation>
        <location evidence="1">Cytoplasm</location>
    </subcellularLocation>
</comment>
<comment type="similarity">
    <text evidence="1">Belongs to the thioester dehydratase family. FabA subfamily.</text>
</comment>
<gene>
    <name evidence="1" type="primary">fabA</name>
    <name type="ordered locus">HNE_3435</name>
</gene>
<evidence type="ECO:0000255" key="1">
    <source>
        <dbReference type="HAMAP-Rule" id="MF_00405"/>
    </source>
</evidence>